<gene>
    <name type="primary">KRT82</name>
    <name type="synonym">KRTHB2</name>
</gene>
<reference key="1">
    <citation type="journal article" date="2000" name="J. Invest. Dermatol.">
        <title>Characterization of a 300 kbp region of human DNA containing the type II hair keratin.</title>
        <authorList>
            <person name="Rogers M.A."/>
            <person name="Winter H."/>
            <person name="Langbein L."/>
            <person name="Wolf C."/>
            <person name="Schweizer J."/>
        </authorList>
    </citation>
    <scope>NUCLEOTIDE SEQUENCE [GENOMIC DNA]</scope>
</reference>
<reference key="2">
    <citation type="journal article" date="2006" name="Nature">
        <title>The finished DNA sequence of human chromosome 12.</title>
        <authorList>
            <person name="Scherer S.E."/>
            <person name="Muzny D.M."/>
            <person name="Buhay C.J."/>
            <person name="Chen R."/>
            <person name="Cree A."/>
            <person name="Ding Y."/>
            <person name="Dugan-Rocha S."/>
            <person name="Gill R."/>
            <person name="Gunaratne P."/>
            <person name="Harris R.A."/>
            <person name="Hawes A.C."/>
            <person name="Hernandez J."/>
            <person name="Hodgson A.V."/>
            <person name="Hume J."/>
            <person name="Jackson A."/>
            <person name="Khan Z.M."/>
            <person name="Kovar-Smith C."/>
            <person name="Lewis L.R."/>
            <person name="Lozado R.J."/>
            <person name="Metzker M.L."/>
            <person name="Milosavljevic A."/>
            <person name="Miner G.R."/>
            <person name="Montgomery K.T."/>
            <person name="Morgan M.B."/>
            <person name="Nazareth L.V."/>
            <person name="Scott G."/>
            <person name="Sodergren E."/>
            <person name="Song X.-Z."/>
            <person name="Steffen D."/>
            <person name="Lovering R.C."/>
            <person name="Wheeler D.A."/>
            <person name="Worley K.C."/>
            <person name="Yuan Y."/>
            <person name="Zhang Z."/>
            <person name="Adams C.Q."/>
            <person name="Ansari-Lari M.A."/>
            <person name="Ayele M."/>
            <person name="Brown M.J."/>
            <person name="Chen G."/>
            <person name="Chen Z."/>
            <person name="Clerc-Blankenburg K.P."/>
            <person name="Davis C."/>
            <person name="Delgado O."/>
            <person name="Dinh H.H."/>
            <person name="Draper H."/>
            <person name="Gonzalez-Garay M.L."/>
            <person name="Havlak P."/>
            <person name="Jackson L.R."/>
            <person name="Jacob L.S."/>
            <person name="Kelly S.H."/>
            <person name="Li L."/>
            <person name="Li Z."/>
            <person name="Liu J."/>
            <person name="Liu W."/>
            <person name="Lu J."/>
            <person name="Maheshwari M."/>
            <person name="Nguyen B.-V."/>
            <person name="Okwuonu G.O."/>
            <person name="Pasternak S."/>
            <person name="Perez L.M."/>
            <person name="Plopper F.J.H."/>
            <person name="Santibanez J."/>
            <person name="Shen H."/>
            <person name="Tabor P.E."/>
            <person name="Verduzco D."/>
            <person name="Waldron L."/>
            <person name="Wang Q."/>
            <person name="Williams G.A."/>
            <person name="Zhang J."/>
            <person name="Zhou J."/>
            <person name="Allen C.C."/>
            <person name="Amin A.G."/>
            <person name="Anyalebechi V."/>
            <person name="Bailey M."/>
            <person name="Barbaria J.A."/>
            <person name="Bimage K.E."/>
            <person name="Bryant N.P."/>
            <person name="Burch P.E."/>
            <person name="Burkett C.E."/>
            <person name="Burrell K.L."/>
            <person name="Calderon E."/>
            <person name="Cardenas V."/>
            <person name="Carter K."/>
            <person name="Casias K."/>
            <person name="Cavazos I."/>
            <person name="Cavazos S.R."/>
            <person name="Ceasar H."/>
            <person name="Chacko J."/>
            <person name="Chan S.N."/>
            <person name="Chavez D."/>
            <person name="Christopoulos C."/>
            <person name="Chu J."/>
            <person name="Cockrell R."/>
            <person name="Cox C.D."/>
            <person name="Dang M."/>
            <person name="Dathorne S.R."/>
            <person name="David R."/>
            <person name="Davis C.M."/>
            <person name="Davy-Carroll L."/>
            <person name="Deshazo D.R."/>
            <person name="Donlin J.E."/>
            <person name="D'Souza L."/>
            <person name="Eaves K.A."/>
            <person name="Egan A."/>
            <person name="Emery-Cohen A.J."/>
            <person name="Escotto M."/>
            <person name="Flagg N."/>
            <person name="Forbes L.D."/>
            <person name="Gabisi A.M."/>
            <person name="Garza M."/>
            <person name="Hamilton C."/>
            <person name="Henderson N."/>
            <person name="Hernandez O."/>
            <person name="Hines S."/>
            <person name="Hogues M.E."/>
            <person name="Huang M."/>
            <person name="Idlebird D.G."/>
            <person name="Johnson R."/>
            <person name="Jolivet A."/>
            <person name="Jones S."/>
            <person name="Kagan R."/>
            <person name="King L.M."/>
            <person name="Leal B."/>
            <person name="Lebow H."/>
            <person name="Lee S."/>
            <person name="LeVan J.M."/>
            <person name="Lewis L.C."/>
            <person name="London P."/>
            <person name="Lorensuhewa L.M."/>
            <person name="Loulseged H."/>
            <person name="Lovett D.A."/>
            <person name="Lucier A."/>
            <person name="Lucier R.L."/>
            <person name="Ma J."/>
            <person name="Madu R.C."/>
            <person name="Mapua P."/>
            <person name="Martindale A.D."/>
            <person name="Martinez E."/>
            <person name="Massey E."/>
            <person name="Mawhiney S."/>
            <person name="Meador M.G."/>
            <person name="Mendez S."/>
            <person name="Mercado C."/>
            <person name="Mercado I.C."/>
            <person name="Merritt C.E."/>
            <person name="Miner Z.L."/>
            <person name="Minja E."/>
            <person name="Mitchell T."/>
            <person name="Mohabbat F."/>
            <person name="Mohabbat K."/>
            <person name="Montgomery B."/>
            <person name="Moore N."/>
            <person name="Morris S."/>
            <person name="Munidasa M."/>
            <person name="Ngo R.N."/>
            <person name="Nguyen N.B."/>
            <person name="Nickerson E."/>
            <person name="Nwaokelemeh O.O."/>
            <person name="Nwokenkwo S."/>
            <person name="Obregon M."/>
            <person name="Oguh M."/>
            <person name="Oragunye N."/>
            <person name="Oviedo R.J."/>
            <person name="Parish B.J."/>
            <person name="Parker D.N."/>
            <person name="Parrish J."/>
            <person name="Parks K.L."/>
            <person name="Paul H.A."/>
            <person name="Payton B.A."/>
            <person name="Perez A."/>
            <person name="Perrin W."/>
            <person name="Pickens A."/>
            <person name="Primus E.L."/>
            <person name="Pu L.-L."/>
            <person name="Puazo M."/>
            <person name="Quiles M.M."/>
            <person name="Quiroz J.B."/>
            <person name="Rabata D."/>
            <person name="Reeves K."/>
            <person name="Ruiz S.J."/>
            <person name="Shao H."/>
            <person name="Sisson I."/>
            <person name="Sonaike T."/>
            <person name="Sorelle R.P."/>
            <person name="Sutton A.E."/>
            <person name="Svatek A.F."/>
            <person name="Svetz L.A."/>
            <person name="Tamerisa K.S."/>
            <person name="Taylor T.R."/>
            <person name="Teague B."/>
            <person name="Thomas N."/>
            <person name="Thorn R.D."/>
            <person name="Trejos Z.Y."/>
            <person name="Trevino B.K."/>
            <person name="Ukegbu O.N."/>
            <person name="Urban J.B."/>
            <person name="Vasquez L.I."/>
            <person name="Vera V.A."/>
            <person name="Villasana D.M."/>
            <person name="Wang L."/>
            <person name="Ward-Moore S."/>
            <person name="Warren J.T."/>
            <person name="Wei X."/>
            <person name="White F."/>
            <person name="Williamson A.L."/>
            <person name="Wleczyk R."/>
            <person name="Wooden H.S."/>
            <person name="Wooden S.H."/>
            <person name="Yen J."/>
            <person name="Yoon L."/>
            <person name="Yoon V."/>
            <person name="Zorrilla S.E."/>
            <person name="Nelson D."/>
            <person name="Kucherlapati R."/>
            <person name="Weinstock G."/>
            <person name="Gibbs R.A."/>
        </authorList>
    </citation>
    <scope>NUCLEOTIDE SEQUENCE [LARGE SCALE GENOMIC DNA]</scope>
</reference>
<name>KRT82_HUMAN</name>
<accession>Q9NSB4</accession>
<protein>
    <recommendedName>
        <fullName>Keratin, type II cuticular Hb2</fullName>
    </recommendedName>
    <alternativeName>
        <fullName>Keratin-82</fullName>
        <shortName>K82</shortName>
    </alternativeName>
    <alternativeName>
        <fullName>Type II hair keratin Hb2</fullName>
    </alternativeName>
    <alternativeName>
        <fullName>Type-II keratin Kb22</fullName>
    </alternativeName>
</protein>
<proteinExistence type="evidence at protein level"/>
<evidence type="ECO:0000255" key="1">
    <source>
        <dbReference type="PROSITE-ProRule" id="PRU01188"/>
    </source>
</evidence>
<comment type="subunit">
    <text>Heterotetramer of two type I and two type II keratins.</text>
</comment>
<comment type="interaction">
    <interactant intactId="EBI-1045341">
        <id>Q9NSB4</id>
    </interactant>
    <interactant intactId="EBI-747133">
        <id>P27658</id>
        <label>COL8A1</label>
    </interactant>
    <organismsDiffer>false</organismsDiffer>
    <experiments>3</experiments>
</comment>
<comment type="interaction">
    <interactant intactId="EBI-1045341">
        <id>Q9NSB4</id>
    </interactant>
    <interactant intactId="EBI-740220">
        <id>O14964</id>
        <label>HGS</label>
    </interactant>
    <organismsDiffer>false</organismsDiffer>
    <experiments>3</experiments>
</comment>
<comment type="interaction">
    <interactant intactId="EBI-1045341">
        <id>Q9NSB4</id>
    </interactant>
    <interactant intactId="EBI-740785">
        <id>P49639</id>
        <label>HOXA1</label>
    </interactant>
    <organismsDiffer>false</organismsDiffer>
    <experiments>3</experiments>
</comment>
<comment type="interaction">
    <interactant intactId="EBI-1045341">
        <id>Q9NSB4</id>
    </interactant>
    <interactant intactId="EBI-739566">
        <id>P19012</id>
        <label>KRT15</label>
    </interactant>
    <organismsDiffer>false</organismsDiffer>
    <experiments>3</experiments>
</comment>
<comment type="interaction">
    <interactant intactId="EBI-1045341">
        <id>Q9NSB4</id>
    </interactant>
    <interactant intactId="EBI-3044087">
        <id>Q7Z3Y8</id>
        <label>KRT27</label>
    </interactant>
    <organismsDiffer>false</organismsDiffer>
    <experiments>3</experiments>
</comment>
<comment type="interaction">
    <interactant intactId="EBI-1045341">
        <id>Q9NSB4</id>
    </interactant>
    <interactant intactId="EBI-948001">
        <id>Q15323</id>
        <label>KRT31</label>
    </interactant>
    <organismsDiffer>false</organismsDiffer>
    <experiments>3</experiments>
</comment>
<comment type="interaction">
    <interactant intactId="EBI-1045341">
        <id>Q9NSB4</id>
    </interactant>
    <interactant intactId="EBI-1049638">
        <id>Q14525</id>
        <label>KRT33B</label>
    </interactant>
    <organismsDiffer>false</organismsDiffer>
    <experiments>3</experiments>
</comment>
<comment type="interaction">
    <interactant intactId="EBI-1045341">
        <id>Q9NSB4</id>
    </interactant>
    <interactant intactId="EBI-1047093">
        <id>O76011</id>
        <label>KRT34</label>
    </interactant>
    <organismsDiffer>false</organismsDiffer>
    <experiments>3</experiments>
</comment>
<comment type="interaction">
    <interactant intactId="EBI-1045341">
        <id>Q9NSB4</id>
    </interactant>
    <interactant intactId="EBI-1058674">
        <id>Q92764</id>
        <label>KRT35</label>
    </interactant>
    <organismsDiffer>false</organismsDiffer>
    <experiments>3</experiments>
</comment>
<comment type="interaction">
    <interactant intactId="EBI-1045341">
        <id>Q9NSB4</id>
    </interactant>
    <interactant intactId="EBI-10171697">
        <id>Q6A162</id>
        <label>KRT40</label>
    </interactant>
    <organismsDiffer>false</organismsDiffer>
    <experiments>3</experiments>
</comment>
<comment type="interaction">
    <interactant intactId="EBI-1045341">
        <id>Q9NSB4</id>
    </interactant>
    <interactant intactId="EBI-769257">
        <id>Q9NRQ2</id>
        <label>PLSCR4</label>
    </interactant>
    <organismsDiffer>false</organismsDiffer>
    <experiments>3</experiments>
</comment>
<comment type="interaction">
    <interactant intactId="EBI-1045341">
        <id>Q9NSB4</id>
    </interactant>
    <interactant intactId="EBI-2107455">
        <id>Q08AM6</id>
        <label>VAC14</label>
    </interactant>
    <organismsDiffer>false</organismsDiffer>
    <experiments>3</experiments>
</comment>
<comment type="miscellaneous">
    <text>There are two types of hair/microfibrillar keratin, I (acidic) and II (neutral to basic).</text>
</comment>
<comment type="similarity">
    <text evidence="1">Belongs to the intermediate filament family.</text>
</comment>
<organism>
    <name type="scientific">Homo sapiens</name>
    <name type="common">Human</name>
    <dbReference type="NCBI Taxonomy" id="9606"/>
    <lineage>
        <taxon>Eukaryota</taxon>
        <taxon>Metazoa</taxon>
        <taxon>Chordata</taxon>
        <taxon>Craniata</taxon>
        <taxon>Vertebrata</taxon>
        <taxon>Euteleostomi</taxon>
        <taxon>Mammalia</taxon>
        <taxon>Eutheria</taxon>
        <taxon>Euarchontoglires</taxon>
        <taxon>Primates</taxon>
        <taxon>Haplorrhini</taxon>
        <taxon>Catarrhini</taxon>
        <taxon>Hominidae</taxon>
        <taxon>Homo</taxon>
    </lineage>
</organism>
<keyword id="KW-0175">Coiled coil</keyword>
<keyword id="KW-0403">Intermediate filament</keyword>
<keyword id="KW-0416">Keratin</keyword>
<keyword id="KW-1267">Proteomics identification</keyword>
<keyword id="KW-1185">Reference proteome</keyword>
<sequence>MSYHSFQPGSRCGSQSFSSYSAVMPRMVTHYAVSKGPCRPGGGRGLRALGCLGSRSLCNVGFGRPRVASRCGGTLPGFGYRLGATCGPSACITPVTINESLLVPLALEIDPTVQRVKRDEKEQIKCLNNRFASFINKVRFLEQKNKLLETKWNFMQQQRCCQTNIEPIFEGYISALRRQLDCVSGDRVRLESELCSLQAALEGYKKKYEEELSLRPCVENEFVALKKDVDTAFLMKADLETNAEALVQEIDFLKSLYEEEICLLQSQISETSVIVKMDNSRELDVDGIIAEIKAQYDDIASRSKAEAEAWYQCRYEELRVTAGNHCDNLRNRKNEILEMNKLIQRLQQETENVKAQRCKLEGAIAEAEQQGEAALNDAKCKLAGLEEALQKAKQDMACLLKEYQEVMNSKLGLDIEIATYRRLLEGEEHRLCEGIGPVNISVSSSKGAFLYEPCGVSTPVLSTGVLRSNGGCSIVGTGELYVPCEPQGLLSCGSGRKSSMTLGAGGSSPSHKH</sequence>
<feature type="chain" id="PRO_0000063697" description="Keratin, type II cuticular Hb2">
    <location>
        <begin position="1"/>
        <end position="513"/>
    </location>
</feature>
<feature type="domain" description="IF rod" evidence="1">
    <location>
        <begin position="120"/>
        <end position="431"/>
    </location>
</feature>
<feature type="region of interest" description="Head">
    <location>
        <begin position="1"/>
        <end position="120"/>
    </location>
</feature>
<feature type="region of interest" description="Coil 1A">
    <location>
        <begin position="121"/>
        <end position="155"/>
    </location>
</feature>
<feature type="region of interest" description="Linker 1">
    <location>
        <begin position="156"/>
        <end position="165"/>
    </location>
</feature>
<feature type="region of interest" description="Coil 1B">
    <location>
        <begin position="166"/>
        <end position="266"/>
    </location>
</feature>
<feature type="region of interest" description="Linker 12">
    <location>
        <begin position="267"/>
        <end position="283"/>
    </location>
</feature>
<feature type="region of interest" description="Coil 2">
    <location>
        <begin position="284"/>
        <end position="427"/>
    </location>
</feature>
<feature type="region of interest" description="Tail">
    <location>
        <begin position="428"/>
        <end position="513"/>
    </location>
</feature>
<feature type="sequence variant" id="VAR_032786" description="In dbSNP:rs1791634.">
    <original>E</original>
    <variation>Q</variation>
    <location>
        <position position="219"/>
    </location>
</feature>
<feature type="sequence variant" id="VAR_032787" description="In dbSNP:rs1732263.">
    <original>E</original>
    <variation>D</variation>
    <location>
        <position position="452"/>
    </location>
</feature>
<feature type="sequence variant" id="VAR_018118" description="In dbSNP:rs2658658.">
    <original>T</original>
    <variation>M</variation>
    <location>
        <position position="458"/>
    </location>
</feature>
<dbReference type="EMBL" id="Y19207">
    <property type="protein sequence ID" value="CAB76827.2"/>
    <property type="molecule type" value="Genomic_DNA"/>
</dbReference>
<dbReference type="EMBL" id="AC078865">
    <property type="status" value="NOT_ANNOTATED_CDS"/>
    <property type="molecule type" value="Genomic_DNA"/>
</dbReference>
<dbReference type="CCDS" id="CCDS8826.1"/>
<dbReference type="RefSeq" id="NP_149022.3">
    <property type="nucleotide sequence ID" value="NM_033033.3"/>
</dbReference>
<dbReference type="SMR" id="Q9NSB4"/>
<dbReference type="BioGRID" id="110086">
    <property type="interactions" value="36"/>
</dbReference>
<dbReference type="ComplexPortal" id="CPX-5664">
    <property type="entry name" value="Keratin-80- Keratin-82 dimer complex"/>
</dbReference>
<dbReference type="FunCoup" id="Q9NSB4">
    <property type="interactions" value="29"/>
</dbReference>
<dbReference type="IntAct" id="Q9NSB4">
    <property type="interactions" value="22"/>
</dbReference>
<dbReference type="STRING" id="9606.ENSP00000257974"/>
<dbReference type="GlyGen" id="Q9NSB4">
    <property type="glycosylation" value="1 site, 1 O-linked glycan (1 site)"/>
</dbReference>
<dbReference type="iPTMnet" id="Q9NSB4"/>
<dbReference type="PhosphoSitePlus" id="Q9NSB4"/>
<dbReference type="SwissPalm" id="Q9NSB4"/>
<dbReference type="BioMuta" id="KRT82"/>
<dbReference type="DMDM" id="148887391"/>
<dbReference type="jPOST" id="Q9NSB4"/>
<dbReference type="MassIVE" id="Q9NSB4"/>
<dbReference type="PaxDb" id="9606-ENSP00000257974"/>
<dbReference type="PeptideAtlas" id="Q9NSB4"/>
<dbReference type="ProteomicsDB" id="82524"/>
<dbReference type="Antibodypedia" id="55914">
    <property type="antibodies" value="103 antibodies from 22 providers"/>
</dbReference>
<dbReference type="DNASU" id="3888"/>
<dbReference type="Ensembl" id="ENST00000257974.3">
    <property type="protein sequence ID" value="ENSP00000257974.3"/>
    <property type="gene ID" value="ENSG00000161850.3"/>
</dbReference>
<dbReference type="GeneID" id="3888"/>
<dbReference type="KEGG" id="hsa:3888"/>
<dbReference type="MANE-Select" id="ENST00000257974.3">
    <property type="protein sequence ID" value="ENSP00000257974.3"/>
    <property type="RefSeq nucleotide sequence ID" value="NM_033033.4"/>
    <property type="RefSeq protein sequence ID" value="NP_149022.3"/>
</dbReference>
<dbReference type="UCSC" id="uc001sai.2">
    <property type="organism name" value="human"/>
</dbReference>
<dbReference type="AGR" id="HGNC:6459"/>
<dbReference type="CTD" id="3888"/>
<dbReference type="DisGeNET" id="3888"/>
<dbReference type="GeneCards" id="KRT82"/>
<dbReference type="HGNC" id="HGNC:6459">
    <property type="gene designation" value="KRT82"/>
</dbReference>
<dbReference type="HPA" id="ENSG00000161850">
    <property type="expression patterns" value="Tissue enriched (skin)"/>
</dbReference>
<dbReference type="MIM" id="601078">
    <property type="type" value="gene"/>
</dbReference>
<dbReference type="neXtProt" id="NX_Q9NSB4"/>
<dbReference type="OpenTargets" id="ENSG00000161850"/>
<dbReference type="PharmGKB" id="PA30248"/>
<dbReference type="VEuPathDB" id="HostDB:ENSG00000161850"/>
<dbReference type="eggNOG" id="ENOG502QWIE">
    <property type="taxonomic scope" value="Eukaryota"/>
</dbReference>
<dbReference type="GeneTree" id="ENSGT00940000161849"/>
<dbReference type="HOGENOM" id="CLU_012560_6_1_1"/>
<dbReference type="InParanoid" id="Q9NSB4"/>
<dbReference type="OMA" id="LPRMVTH"/>
<dbReference type="OrthoDB" id="2441647at2759"/>
<dbReference type="PAN-GO" id="Q9NSB4">
    <property type="GO annotations" value="4 GO annotations based on evolutionary models"/>
</dbReference>
<dbReference type="PhylomeDB" id="Q9NSB4"/>
<dbReference type="TreeFam" id="TF317854"/>
<dbReference type="PathwayCommons" id="Q9NSB4"/>
<dbReference type="Reactome" id="R-HSA-6805567">
    <property type="pathway name" value="Keratinization"/>
</dbReference>
<dbReference type="Reactome" id="R-HSA-6809371">
    <property type="pathway name" value="Formation of the cornified envelope"/>
</dbReference>
<dbReference type="SignaLink" id="Q9NSB4"/>
<dbReference type="BioGRID-ORCS" id="3888">
    <property type="hits" value="20 hits in 1138 CRISPR screens"/>
</dbReference>
<dbReference type="GenomeRNAi" id="3888"/>
<dbReference type="Pharos" id="Q9NSB4">
    <property type="development level" value="Tdark"/>
</dbReference>
<dbReference type="PRO" id="PR:Q9NSB4"/>
<dbReference type="Proteomes" id="UP000005640">
    <property type="component" value="Chromosome 12"/>
</dbReference>
<dbReference type="RNAct" id="Q9NSB4">
    <property type="molecule type" value="protein"/>
</dbReference>
<dbReference type="Bgee" id="ENSG00000161850">
    <property type="expression patterns" value="Expressed in male germ line stem cell (sensu Vertebrata) in testis and 18 other cell types or tissues"/>
</dbReference>
<dbReference type="GO" id="GO:0005829">
    <property type="term" value="C:cytosol"/>
    <property type="evidence" value="ECO:0000304"/>
    <property type="project" value="Reactome"/>
</dbReference>
<dbReference type="GO" id="GO:0045095">
    <property type="term" value="C:keratin filament"/>
    <property type="evidence" value="ECO:0000314"/>
    <property type="project" value="UniProtKB"/>
</dbReference>
<dbReference type="GO" id="GO:0030280">
    <property type="term" value="F:structural constituent of skin epidermis"/>
    <property type="evidence" value="ECO:0000318"/>
    <property type="project" value="GO_Central"/>
</dbReference>
<dbReference type="GO" id="GO:0045109">
    <property type="term" value="P:intermediate filament organization"/>
    <property type="evidence" value="ECO:0000318"/>
    <property type="project" value="GO_Central"/>
</dbReference>
<dbReference type="GO" id="GO:0031424">
    <property type="term" value="P:keratinization"/>
    <property type="evidence" value="ECO:0000318"/>
    <property type="project" value="GO_Central"/>
</dbReference>
<dbReference type="FunFam" id="1.20.5.1160:FF:000001">
    <property type="entry name" value="Keratin type II"/>
    <property type="match status" value="1"/>
</dbReference>
<dbReference type="FunFam" id="1.20.5.170:FF:000004">
    <property type="entry name" value="Keratin, type II cytoskeletal 5"/>
    <property type="match status" value="1"/>
</dbReference>
<dbReference type="FunFam" id="1.20.5.500:FF:000001">
    <property type="entry name" value="Type II keratin 23"/>
    <property type="match status" value="1"/>
</dbReference>
<dbReference type="Gene3D" id="1.20.5.170">
    <property type="match status" value="1"/>
</dbReference>
<dbReference type="Gene3D" id="1.20.5.500">
    <property type="entry name" value="Single helix bin"/>
    <property type="match status" value="1"/>
</dbReference>
<dbReference type="Gene3D" id="1.20.5.1160">
    <property type="entry name" value="Vasodilator-stimulated phosphoprotein"/>
    <property type="match status" value="1"/>
</dbReference>
<dbReference type="InterPro" id="IPR018039">
    <property type="entry name" value="IF_conserved"/>
</dbReference>
<dbReference type="InterPro" id="IPR039008">
    <property type="entry name" value="IF_rod_dom"/>
</dbReference>
<dbReference type="InterPro" id="IPR032444">
    <property type="entry name" value="Keratin_2_head"/>
</dbReference>
<dbReference type="InterPro" id="IPR003054">
    <property type="entry name" value="Keratin_II"/>
</dbReference>
<dbReference type="PANTHER" id="PTHR45616">
    <property type="entry name" value="GATA-TYPE DOMAIN-CONTAINING PROTEIN"/>
    <property type="match status" value="1"/>
</dbReference>
<dbReference type="PANTHER" id="PTHR45616:SF12">
    <property type="entry name" value="KERATIN, TYPE II CUTICULAR HB2"/>
    <property type="match status" value="1"/>
</dbReference>
<dbReference type="Pfam" id="PF00038">
    <property type="entry name" value="Filament"/>
    <property type="match status" value="1"/>
</dbReference>
<dbReference type="Pfam" id="PF16208">
    <property type="entry name" value="Keratin_2_head"/>
    <property type="match status" value="1"/>
</dbReference>
<dbReference type="PRINTS" id="PR01276">
    <property type="entry name" value="TYPE2KERATIN"/>
</dbReference>
<dbReference type="SMART" id="SM01391">
    <property type="entry name" value="Filament"/>
    <property type="match status" value="1"/>
</dbReference>
<dbReference type="SUPFAM" id="SSF64593">
    <property type="entry name" value="Intermediate filament protein, coiled coil region"/>
    <property type="match status" value="3"/>
</dbReference>
<dbReference type="PROSITE" id="PS00226">
    <property type="entry name" value="IF_ROD_1"/>
    <property type="match status" value="1"/>
</dbReference>
<dbReference type="PROSITE" id="PS51842">
    <property type="entry name" value="IF_ROD_2"/>
    <property type="match status" value="1"/>
</dbReference>